<evidence type="ECO:0000250" key="1"/>
<evidence type="ECO:0000255" key="2">
    <source>
        <dbReference type="PROSITE-ProRule" id="PRU00723"/>
    </source>
</evidence>
<evidence type="ECO:0000305" key="3"/>
<gene>
    <name type="primary">YTH1</name>
    <name type="ordered locus">KLLA0F08129g</name>
</gene>
<dbReference type="EMBL" id="CR382126">
    <property type="protein sequence ID" value="CAG98156.1"/>
    <property type="molecule type" value="Genomic_DNA"/>
</dbReference>
<dbReference type="RefSeq" id="XP_455448.1">
    <property type="nucleotide sequence ID" value="XM_455448.1"/>
</dbReference>
<dbReference type="SMR" id="Q6CKU1"/>
<dbReference type="FunCoup" id="Q6CKU1">
    <property type="interactions" value="101"/>
</dbReference>
<dbReference type="STRING" id="284590.Q6CKU1"/>
<dbReference type="PaxDb" id="284590-Q6CKU1"/>
<dbReference type="KEGG" id="kla:KLLA0_F08129g"/>
<dbReference type="eggNOG" id="KOG1040">
    <property type="taxonomic scope" value="Eukaryota"/>
</dbReference>
<dbReference type="HOGENOM" id="CLU_024513_1_2_1"/>
<dbReference type="InParanoid" id="Q6CKU1"/>
<dbReference type="OMA" id="SLVCKHY"/>
<dbReference type="Proteomes" id="UP000000598">
    <property type="component" value="Chromosome F"/>
</dbReference>
<dbReference type="GO" id="GO:0005634">
    <property type="term" value="C:nucleus"/>
    <property type="evidence" value="ECO:0007669"/>
    <property type="project" value="UniProtKB-SubCell"/>
</dbReference>
<dbReference type="GO" id="GO:0003723">
    <property type="term" value="F:RNA binding"/>
    <property type="evidence" value="ECO:0007669"/>
    <property type="project" value="UniProtKB-KW"/>
</dbReference>
<dbReference type="GO" id="GO:0008270">
    <property type="term" value="F:zinc ion binding"/>
    <property type="evidence" value="ECO:0007669"/>
    <property type="project" value="UniProtKB-KW"/>
</dbReference>
<dbReference type="GO" id="GO:0006397">
    <property type="term" value="P:mRNA processing"/>
    <property type="evidence" value="ECO:0007669"/>
    <property type="project" value="UniProtKB-KW"/>
</dbReference>
<dbReference type="FunFam" id="4.10.1000.10:FF:000012">
    <property type="entry name" value="cleavage and polyadenylation specificity factor subunit 4"/>
    <property type="match status" value="1"/>
</dbReference>
<dbReference type="Gene3D" id="4.10.1000.10">
    <property type="entry name" value="Zinc finger, CCCH-type"/>
    <property type="match status" value="2"/>
</dbReference>
<dbReference type="InterPro" id="IPR045348">
    <property type="entry name" value="CPSF4/Yth1"/>
</dbReference>
<dbReference type="InterPro" id="IPR000571">
    <property type="entry name" value="Znf_CCCH"/>
</dbReference>
<dbReference type="InterPro" id="IPR036855">
    <property type="entry name" value="Znf_CCCH_sf"/>
</dbReference>
<dbReference type="PANTHER" id="PTHR23102:SF24">
    <property type="entry name" value="CLEAVAGE AND POLYADENYLATION SPECIFICITY FACTOR SUBUNIT 4"/>
    <property type="match status" value="1"/>
</dbReference>
<dbReference type="PANTHER" id="PTHR23102">
    <property type="entry name" value="CLEAVAGE AND POLYADENYLATION SPECIFICITY FACTOR SUBUNIT 4-RELATED"/>
    <property type="match status" value="1"/>
</dbReference>
<dbReference type="Pfam" id="PF00642">
    <property type="entry name" value="zf-CCCH"/>
    <property type="match status" value="1"/>
</dbReference>
<dbReference type="Pfam" id="PF14608">
    <property type="entry name" value="zf-CCCH_2"/>
    <property type="match status" value="3"/>
</dbReference>
<dbReference type="SMART" id="SM00356">
    <property type="entry name" value="ZnF_C3H1"/>
    <property type="match status" value="5"/>
</dbReference>
<dbReference type="SUPFAM" id="SSF90229">
    <property type="entry name" value="CCCH zinc finger"/>
    <property type="match status" value="2"/>
</dbReference>
<dbReference type="PROSITE" id="PS50103">
    <property type="entry name" value="ZF_C3H1"/>
    <property type="match status" value="5"/>
</dbReference>
<reference key="1">
    <citation type="journal article" date="2004" name="Nature">
        <title>Genome evolution in yeasts.</title>
        <authorList>
            <person name="Dujon B."/>
            <person name="Sherman D."/>
            <person name="Fischer G."/>
            <person name="Durrens P."/>
            <person name="Casaregola S."/>
            <person name="Lafontaine I."/>
            <person name="de Montigny J."/>
            <person name="Marck C."/>
            <person name="Neuveglise C."/>
            <person name="Talla E."/>
            <person name="Goffard N."/>
            <person name="Frangeul L."/>
            <person name="Aigle M."/>
            <person name="Anthouard V."/>
            <person name="Babour A."/>
            <person name="Barbe V."/>
            <person name="Barnay S."/>
            <person name="Blanchin S."/>
            <person name="Beckerich J.-M."/>
            <person name="Beyne E."/>
            <person name="Bleykasten C."/>
            <person name="Boisrame A."/>
            <person name="Boyer J."/>
            <person name="Cattolico L."/>
            <person name="Confanioleri F."/>
            <person name="de Daruvar A."/>
            <person name="Despons L."/>
            <person name="Fabre E."/>
            <person name="Fairhead C."/>
            <person name="Ferry-Dumazet H."/>
            <person name="Groppi A."/>
            <person name="Hantraye F."/>
            <person name="Hennequin C."/>
            <person name="Jauniaux N."/>
            <person name="Joyet P."/>
            <person name="Kachouri R."/>
            <person name="Kerrest A."/>
            <person name="Koszul R."/>
            <person name="Lemaire M."/>
            <person name="Lesur I."/>
            <person name="Ma L."/>
            <person name="Muller H."/>
            <person name="Nicaud J.-M."/>
            <person name="Nikolski M."/>
            <person name="Oztas S."/>
            <person name="Ozier-Kalogeropoulos O."/>
            <person name="Pellenz S."/>
            <person name="Potier S."/>
            <person name="Richard G.-F."/>
            <person name="Straub M.-L."/>
            <person name="Suleau A."/>
            <person name="Swennen D."/>
            <person name="Tekaia F."/>
            <person name="Wesolowski-Louvel M."/>
            <person name="Westhof E."/>
            <person name="Wirth B."/>
            <person name="Zeniou-Meyer M."/>
            <person name="Zivanovic Y."/>
            <person name="Bolotin-Fukuhara M."/>
            <person name="Thierry A."/>
            <person name="Bouchier C."/>
            <person name="Caudron B."/>
            <person name="Scarpelli C."/>
            <person name="Gaillardin C."/>
            <person name="Weissenbach J."/>
            <person name="Wincker P."/>
            <person name="Souciet J.-L."/>
        </authorList>
    </citation>
    <scope>NUCLEOTIDE SEQUENCE [LARGE SCALE GENOMIC DNA]</scope>
    <source>
        <strain>ATCC 8585 / CBS 2359 / DSM 70799 / NBRC 1267 / NRRL Y-1140 / WM37</strain>
    </source>
</reference>
<keyword id="KW-0479">Metal-binding</keyword>
<keyword id="KW-0507">mRNA processing</keyword>
<keyword id="KW-0539">Nucleus</keyword>
<keyword id="KW-1185">Reference proteome</keyword>
<keyword id="KW-0677">Repeat</keyword>
<keyword id="KW-0694">RNA-binding</keyword>
<keyword id="KW-0862">Zinc</keyword>
<keyword id="KW-0863">Zinc-finger</keyword>
<name>YTH1_KLULA</name>
<organism>
    <name type="scientific">Kluyveromyces lactis (strain ATCC 8585 / CBS 2359 / DSM 70799 / NBRC 1267 / NRRL Y-1140 / WM37)</name>
    <name type="common">Yeast</name>
    <name type="synonym">Candida sphaerica</name>
    <dbReference type="NCBI Taxonomy" id="284590"/>
    <lineage>
        <taxon>Eukaryota</taxon>
        <taxon>Fungi</taxon>
        <taxon>Dikarya</taxon>
        <taxon>Ascomycota</taxon>
        <taxon>Saccharomycotina</taxon>
        <taxon>Saccharomycetes</taxon>
        <taxon>Saccharomycetales</taxon>
        <taxon>Saccharomycetaceae</taxon>
        <taxon>Kluyveromyces</taxon>
    </lineage>
</organism>
<comment type="function">
    <text evidence="1">Component of the cleavage factor I (CF I) involved in pre-mRNA 3'-end processing.</text>
</comment>
<comment type="subcellular location">
    <subcellularLocation>
        <location evidence="1">Nucleus</location>
    </subcellularLocation>
</comment>
<comment type="similarity">
    <text evidence="3">Belongs to the CPSF4/YTH1 family.</text>
</comment>
<sequence length="210" mass="24742">MSIVHPDTSKYEFNFEPFLRKEYSFSLDPDRPVCQYYNSREGIKSCPNGARCPNKHVLPIFQNKIVCKHWLRGLCKKNDQCEYLHEYNLRKMPECVFFTKNGYCTQSPECQYLHVDHKSQLEECEDYNMGFCPSGPACTKKHVKKVLCPRYLVGFCPLGKDCDWSHPKFKVPSEHSKLRIKKDEHINTRKMDEERERRLNAIINGDILVT</sequence>
<accession>Q6CKU1</accession>
<proteinExistence type="inferred from homology"/>
<protein>
    <recommendedName>
        <fullName>mRNA 3'-end-processing protein YTH1</fullName>
    </recommendedName>
</protein>
<feature type="chain" id="PRO_0000238540" description="mRNA 3'-end-processing protein YTH1">
    <location>
        <begin position="1"/>
        <end position="210"/>
    </location>
</feature>
<feature type="zinc finger region" description="C3H1-type 1" evidence="2">
    <location>
        <begin position="28"/>
        <end position="59"/>
    </location>
</feature>
<feature type="zinc finger region" description="C3H1-type 2" evidence="2">
    <location>
        <begin position="61"/>
        <end position="88"/>
    </location>
</feature>
<feature type="zinc finger region" description="C3H1-type 3" evidence="2">
    <location>
        <begin position="89"/>
        <end position="117"/>
    </location>
</feature>
<feature type="zinc finger region" description="C3H1-type 4" evidence="2">
    <location>
        <begin position="118"/>
        <end position="142"/>
    </location>
</feature>
<feature type="zinc finger region" description="C3H1-type 5" evidence="2">
    <location>
        <begin position="143"/>
        <end position="169"/>
    </location>
</feature>